<keyword id="KW-0012">Acyltransferase</keyword>
<keyword id="KW-0441">Lipid A biosynthesis</keyword>
<keyword id="KW-0444">Lipid biosynthesis</keyword>
<keyword id="KW-0443">Lipid metabolism</keyword>
<keyword id="KW-1185">Reference proteome</keyword>
<keyword id="KW-0677">Repeat</keyword>
<keyword id="KW-0808">Transferase</keyword>
<reference key="1">
    <citation type="journal article" date="2011" name="Stand. Genomic Sci.">
        <title>Complete genome sequence of the halophilic and highly halotolerant Chromohalobacter salexigens type strain (1H11(T)).</title>
        <authorList>
            <person name="Copeland A."/>
            <person name="O'Connor K."/>
            <person name="Lucas S."/>
            <person name="Lapidus A."/>
            <person name="Berry K.W."/>
            <person name="Detter J.C."/>
            <person name="Del Rio T.G."/>
            <person name="Hammon N."/>
            <person name="Dalin E."/>
            <person name="Tice H."/>
            <person name="Pitluck S."/>
            <person name="Bruce D."/>
            <person name="Goodwin L."/>
            <person name="Han C."/>
            <person name="Tapia R."/>
            <person name="Saunders E."/>
            <person name="Schmutz J."/>
            <person name="Brettin T."/>
            <person name="Larimer F."/>
            <person name="Land M."/>
            <person name="Hauser L."/>
            <person name="Vargas C."/>
            <person name="Nieto J.J."/>
            <person name="Kyrpides N.C."/>
            <person name="Ivanova N."/>
            <person name="Goker M."/>
            <person name="Klenk H.P."/>
            <person name="Csonka L.N."/>
            <person name="Woyke T."/>
        </authorList>
    </citation>
    <scope>NUCLEOTIDE SEQUENCE [LARGE SCALE GENOMIC DNA]</scope>
    <source>
        <strain>ATCC BAA-138 / DSM 3043 / CIP 106854 / NCIMB 13768 / 1H11</strain>
    </source>
</reference>
<protein>
    <recommendedName>
        <fullName evidence="1">UDP-3-O-acylglucosamine N-acyltransferase</fullName>
        <ecNumber evidence="1">2.3.1.191</ecNumber>
    </recommendedName>
</protein>
<name>LPXD_CHRSD</name>
<organism>
    <name type="scientific">Chromohalobacter salexigens (strain ATCC BAA-138 / DSM 3043 / CIP 106854 / NCIMB 13768 / 1H11)</name>
    <dbReference type="NCBI Taxonomy" id="290398"/>
    <lineage>
        <taxon>Bacteria</taxon>
        <taxon>Pseudomonadati</taxon>
        <taxon>Pseudomonadota</taxon>
        <taxon>Gammaproteobacteria</taxon>
        <taxon>Oceanospirillales</taxon>
        <taxon>Halomonadaceae</taxon>
        <taxon>Chromohalobacter</taxon>
    </lineage>
</organism>
<proteinExistence type="inferred from homology"/>
<evidence type="ECO:0000255" key="1">
    <source>
        <dbReference type="HAMAP-Rule" id="MF_00523"/>
    </source>
</evidence>
<gene>
    <name evidence="1" type="primary">lpxD</name>
    <name type="ordered locus">Csal_0573</name>
</gene>
<sequence>MKTLTPCAFTLGELAERLKARLVGDSDRRVTGLATLLDAGPNDITFLANKTYLKYLPDTRAAAVLVHPAHGTDAPCARLELENPYLGYAELSRLFDPLAGQAPEGVHPSAVVAESARIGEHVSVGPQCVIEAGAVIGDGCVIGAGSIVGADSEIGADSRLHANVTVYHGVSVGRRAILHSGCVIGADGFGFAHDGQGWHKIAQLGGVIVGDDVEIGSCSSIDRGALGDTVIGNDVKIDSQVQIAHNVQIGDHSALAGCVGIAGSTRVGSHCMLGGGVGLSGHLTLCDGVQVTGMSLVTNSIHEPGVYSSGTGAMPNGLWRKNAVRFKQLDELAKRLSRLERGASDTP</sequence>
<feature type="chain" id="PRO_0000264360" description="UDP-3-O-acylglucosamine N-acyltransferase">
    <location>
        <begin position="1"/>
        <end position="347"/>
    </location>
</feature>
<feature type="active site" description="Proton acceptor" evidence="1">
    <location>
        <position position="245"/>
    </location>
</feature>
<dbReference type="EC" id="2.3.1.191" evidence="1"/>
<dbReference type="EMBL" id="CP000285">
    <property type="protein sequence ID" value="ABE57935.1"/>
    <property type="molecule type" value="Genomic_DNA"/>
</dbReference>
<dbReference type="RefSeq" id="WP_011505881.1">
    <property type="nucleotide sequence ID" value="NC_007963.1"/>
</dbReference>
<dbReference type="SMR" id="Q1R023"/>
<dbReference type="STRING" id="290398.Csal_0573"/>
<dbReference type="GeneID" id="95333329"/>
<dbReference type="KEGG" id="csa:Csal_0573"/>
<dbReference type="eggNOG" id="COG1044">
    <property type="taxonomic scope" value="Bacteria"/>
</dbReference>
<dbReference type="HOGENOM" id="CLU_049865_0_1_6"/>
<dbReference type="OrthoDB" id="9784739at2"/>
<dbReference type="UniPathway" id="UPA00973"/>
<dbReference type="Proteomes" id="UP000000239">
    <property type="component" value="Chromosome"/>
</dbReference>
<dbReference type="GO" id="GO:0016020">
    <property type="term" value="C:membrane"/>
    <property type="evidence" value="ECO:0007669"/>
    <property type="project" value="GOC"/>
</dbReference>
<dbReference type="GO" id="GO:0016410">
    <property type="term" value="F:N-acyltransferase activity"/>
    <property type="evidence" value="ECO:0007669"/>
    <property type="project" value="InterPro"/>
</dbReference>
<dbReference type="GO" id="GO:0009245">
    <property type="term" value="P:lipid A biosynthetic process"/>
    <property type="evidence" value="ECO:0007669"/>
    <property type="project" value="UniProtKB-UniRule"/>
</dbReference>
<dbReference type="CDD" id="cd03352">
    <property type="entry name" value="LbH_LpxD"/>
    <property type="match status" value="1"/>
</dbReference>
<dbReference type="Gene3D" id="1.20.5.170">
    <property type="match status" value="1"/>
</dbReference>
<dbReference type="Gene3D" id="2.160.10.10">
    <property type="entry name" value="Hexapeptide repeat proteins"/>
    <property type="match status" value="1"/>
</dbReference>
<dbReference type="Gene3D" id="3.40.1390.10">
    <property type="entry name" value="MurE/MurF, N-terminal domain"/>
    <property type="match status" value="1"/>
</dbReference>
<dbReference type="HAMAP" id="MF_00523">
    <property type="entry name" value="LpxD"/>
    <property type="match status" value="1"/>
</dbReference>
<dbReference type="InterPro" id="IPR001451">
    <property type="entry name" value="Hexapep"/>
</dbReference>
<dbReference type="InterPro" id="IPR018357">
    <property type="entry name" value="Hexapep_transf_CS"/>
</dbReference>
<dbReference type="InterPro" id="IPR007691">
    <property type="entry name" value="LpxD"/>
</dbReference>
<dbReference type="InterPro" id="IPR011004">
    <property type="entry name" value="Trimer_LpxA-like_sf"/>
</dbReference>
<dbReference type="InterPro" id="IPR020573">
    <property type="entry name" value="UDP_GlcNAc_AcTrfase_non-rep"/>
</dbReference>
<dbReference type="NCBIfam" id="TIGR01853">
    <property type="entry name" value="lipid_A_lpxD"/>
    <property type="match status" value="1"/>
</dbReference>
<dbReference type="NCBIfam" id="NF002060">
    <property type="entry name" value="PRK00892.1"/>
    <property type="match status" value="1"/>
</dbReference>
<dbReference type="PANTHER" id="PTHR43378">
    <property type="entry name" value="UDP-3-O-ACYLGLUCOSAMINE N-ACYLTRANSFERASE"/>
    <property type="match status" value="1"/>
</dbReference>
<dbReference type="PANTHER" id="PTHR43378:SF2">
    <property type="entry name" value="UDP-3-O-ACYLGLUCOSAMINE N-ACYLTRANSFERASE 1, MITOCHONDRIAL-RELATED"/>
    <property type="match status" value="1"/>
</dbReference>
<dbReference type="Pfam" id="PF00132">
    <property type="entry name" value="Hexapep"/>
    <property type="match status" value="3"/>
</dbReference>
<dbReference type="Pfam" id="PF04613">
    <property type="entry name" value="LpxD"/>
    <property type="match status" value="1"/>
</dbReference>
<dbReference type="SUPFAM" id="SSF51161">
    <property type="entry name" value="Trimeric LpxA-like enzymes"/>
    <property type="match status" value="1"/>
</dbReference>
<dbReference type="PROSITE" id="PS00101">
    <property type="entry name" value="HEXAPEP_TRANSFERASES"/>
    <property type="match status" value="1"/>
</dbReference>
<comment type="function">
    <text evidence="1">Catalyzes the N-acylation of UDP-3-O-acylglucosamine using 3-hydroxyacyl-ACP as the acyl donor. Is involved in the biosynthesis of lipid A, a phosphorylated glycolipid that anchors the lipopolysaccharide to the outer membrane of the cell.</text>
</comment>
<comment type="catalytic activity">
    <reaction evidence="1">
        <text>a UDP-3-O-[(3R)-3-hydroxyacyl]-alpha-D-glucosamine + a (3R)-hydroxyacyl-[ACP] = a UDP-2-N,3-O-bis[(3R)-3-hydroxyacyl]-alpha-D-glucosamine + holo-[ACP] + H(+)</text>
        <dbReference type="Rhea" id="RHEA:53836"/>
        <dbReference type="Rhea" id="RHEA-COMP:9685"/>
        <dbReference type="Rhea" id="RHEA-COMP:9945"/>
        <dbReference type="ChEBI" id="CHEBI:15378"/>
        <dbReference type="ChEBI" id="CHEBI:64479"/>
        <dbReference type="ChEBI" id="CHEBI:78827"/>
        <dbReference type="ChEBI" id="CHEBI:137740"/>
        <dbReference type="ChEBI" id="CHEBI:137748"/>
        <dbReference type="EC" id="2.3.1.191"/>
    </reaction>
</comment>
<comment type="pathway">
    <text evidence="1">Bacterial outer membrane biogenesis; LPS lipid A biosynthesis.</text>
</comment>
<comment type="subunit">
    <text evidence="1">Homotrimer.</text>
</comment>
<comment type="similarity">
    <text evidence="1">Belongs to the transferase hexapeptide repeat family. LpxD subfamily.</text>
</comment>
<accession>Q1R023</accession>